<organism>
    <name type="scientific">Klebsiella aerogenes</name>
    <name type="common">Enterobacter aerogenes</name>
    <dbReference type="NCBI Taxonomy" id="548"/>
    <lineage>
        <taxon>Bacteria</taxon>
        <taxon>Pseudomonadati</taxon>
        <taxon>Pseudomonadota</taxon>
        <taxon>Gammaproteobacteria</taxon>
        <taxon>Enterobacterales</taxon>
        <taxon>Enterobacteriaceae</taxon>
        <taxon>Klebsiella/Raoultella group</taxon>
        <taxon>Klebsiella</taxon>
    </lineage>
</organism>
<sequence length="35" mass="3722">MRRVKLLCTALMLLASHGALAVSYPLPPEGSRLVG</sequence>
<keyword id="KW-0133">Cell shape</keyword>
<keyword id="KW-0961">Cell wall biogenesis/degradation</keyword>
<keyword id="KW-0328">Glycosyltransferase</keyword>
<keyword id="KW-0378">Hydrolase</keyword>
<keyword id="KW-0573">Peptidoglycan synthesis</keyword>
<keyword id="KW-0574">Periplasm</keyword>
<keyword id="KW-0732">Signal</keyword>
<keyword id="KW-0808">Transferase</keyword>
<feature type="signal peptide" evidence="1">
    <location>
        <begin position="1"/>
        <end position="21"/>
    </location>
</feature>
<feature type="chain" id="PRO_0000021195" description="Probable L,D-transpeptidase ErfK/SrfK">
    <location>
        <begin position="22"/>
        <end position="35" status="greater than"/>
    </location>
</feature>
<feature type="non-terminal residue">
    <location>
        <position position="35"/>
    </location>
</feature>
<reference key="1">
    <citation type="journal article" date="1993" name="J. Bacteriol.">
        <title>The nac (nitrogen assimilation control) gene from Klebsiella aerogenes.</title>
        <authorList>
            <person name="Schwacha A."/>
            <person name="Bender R.A."/>
        </authorList>
    </citation>
    <scope>NUCLEOTIDE SEQUENCE [GENOMIC DNA]</scope>
    <source>
        <strain>W70 / KC1043</strain>
    </source>
</reference>
<dbReference type="EC" id="2.-.-.-"/>
<dbReference type="EMBL" id="L01114">
    <property type="protein sequence ID" value="AAA18175.2"/>
    <property type="status" value="ALT_INIT"/>
    <property type="molecule type" value="Genomic_DNA"/>
</dbReference>
<dbReference type="PIR" id="D47099">
    <property type="entry name" value="D47099"/>
</dbReference>
<dbReference type="STRING" id="548.EAG7_00769"/>
<dbReference type="UniPathway" id="UPA00219"/>
<dbReference type="GO" id="GO:0042597">
    <property type="term" value="C:periplasmic space"/>
    <property type="evidence" value="ECO:0007669"/>
    <property type="project" value="UniProtKB-SubCell"/>
</dbReference>
<dbReference type="GO" id="GO:0016757">
    <property type="term" value="F:glycosyltransferase activity"/>
    <property type="evidence" value="ECO:0007669"/>
    <property type="project" value="UniProtKB-KW"/>
</dbReference>
<dbReference type="GO" id="GO:0016787">
    <property type="term" value="F:hydrolase activity"/>
    <property type="evidence" value="ECO:0007669"/>
    <property type="project" value="UniProtKB-KW"/>
</dbReference>
<dbReference type="GO" id="GO:0071555">
    <property type="term" value="P:cell wall organization"/>
    <property type="evidence" value="ECO:0007669"/>
    <property type="project" value="UniProtKB-KW"/>
</dbReference>
<dbReference type="GO" id="GO:0009252">
    <property type="term" value="P:peptidoglycan biosynthetic process"/>
    <property type="evidence" value="ECO:0007669"/>
    <property type="project" value="UniProtKB-UniPathway"/>
</dbReference>
<dbReference type="GO" id="GO:0008360">
    <property type="term" value="P:regulation of cell shape"/>
    <property type="evidence" value="ECO:0007669"/>
    <property type="project" value="UniProtKB-KW"/>
</dbReference>
<protein>
    <recommendedName>
        <fullName>Probable L,D-transpeptidase ErfK/SrfK</fullName>
        <ecNumber>2.-.-.-</ecNumber>
    </recommendedName>
</protein>
<name>ERFK_KLEAE</name>
<gene>
    <name type="primary">erfK</name>
</gene>
<proteinExistence type="inferred from homology"/>
<evidence type="ECO:0000250" key="1"/>
<evidence type="ECO:0000305" key="2"/>
<accession>Q08599</accession>
<comment type="pathway">
    <text>Cell wall biogenesis; peptidoglycan biosynthesis.</text>
</comment>
<comment type="subcellular location">
    <subcellularLocation>
        <location evidence="2">Periplasm</location>
    </subcellularLocation>
</comment>
<comment type="similarity">
    <text evidence="2">Belongs to the YkuD family.</text>
</comment>
<comment type="sequence caution" evidence="2">
    <conflict type="erroneous initiation">
        <sequence resource="EMBL-CDS" id="AAA18175"/>
    </conflict>
    <text>Extended N-terminus.</text>
</comment>